<feature type="chain" id="PRO_1000119375" description="Imidazole glycerol phosphate synthase subunit HisH">
    <location>
        <begin position="1"/>
        <end position="212"/>
    </location>
</feature>
<feature type="domain" description="Glutamine amidotransferase type-1" evidence="1">
    <location>
        <begin position="1"/>
        <end position="212"/>
    </location>
</feature>
<feature type="active site" description="Nucleophile" evidence="1">
    <location>
        <position position="79"/>
    </location>
</feature>
<feature type="active site" evidence="1">
    <location>
        <position position="187"/>
    </location>
</feature>
<feature type="active site" evidence="1">
    <location>
        <position position="189"/>
    </location>
</feature>
<comment type="function">
    <text evidence="1">IGPS catalyzes the conversion of PRFAR and glutamine to IGP, AICAR and glutamate. The HisH subunit catalyzes the hydrolysis of glutamine to glutamate and ammonia as part of the synthesis of IGP and AICAR. The resulting ammonia molecule is channeled to the active site of HisF.</text>
</comment>
<comment type="catalytic activity">
    <reaction evidence="1">
        <text>5-[(5-phospho-1-deoxy-D-ribulos-1-ylimino)methylamino]-1-(5-phospho-beta-D-ribosyl)imidazole-4-carboxamide + L-glutamine = D-erythro-1-(imidazol-4-yl)glycerol 3-phosphate + 5-amino-1-(5-phospho-beta-D-ribosyl)imidazole-4-carboxamide + L-glutamate + H(+)</text>
        <dbReference type="Rhea" id="RHEA:24793"/>
        <dbReference type="ChEBI" id="CHEBI:15378"/>
        <dbReference type="ChEBI" id="CHEBI:29985"/>
        <dbReference type="ChEBI" id="CHEBI:58278"/>
        <dbReference type="ChEBI" id="CHEBI:58359"/>
        <dbReference type="ChEBI" id="CHEBI:58475"/>
        <dbReference type="ChEBI" id="CHEBI:58525"/>
        <dbReference type="EC" id="4.3.2.10"/>
    </reaction>
</comment>
<comment type="catalytic activity">
    <reaction evidence="1">
        <text>L-glutamine + H2O = L-glutamate + NH4(+)</text>
        <dbReference type="Rhea" id="RHEA:15889"/>
        <dbReference type="ChEBI" id="CHEBI:15377"/>
        <dbReference type="ChEBI" id="CHEBI:28938"/>
        <dbReference type="ChEBI" id="CHEBI:29985"/>
        <dbReference type="ChEBI" id="CHEBI:58359"/>
        <dbReference type="EC" id="3.5.1.2"/>
    </reaction>
</comment>
<comment type="pathway">
    <text evidence="1">Amino-acid biosynthesis; L-histidine biosynthesis; L-histidine from 5-phospho-alpha-D-ribose 1-diphosphate: step 5/9.</text>
</comment>
<comment type="subunit">
    <text evidence="1">Heterodimer of HisH and HisF.</text>
</comment>
<comment type="subcellular location">
    <subcellularLocation>
        <location evidence="1">Cytoplasm</location>
    </subcellularLocation>
</comment>
<evidence type="ECO:0000255" key="1">
    <source>
        <dbReference type="HAMAP-Rule" id="MF_00278"/>
    </source>
</evidence>
<reference key="1">
    <citation type="submission" date="2008-10" db="EMBL/GenBank/DDBJ databases">
        <title>Complete sequence of Desulfovibrio vulgaris str. 'Miyazaki F'.</title>
        <authorList>
            <person name="Lucas S."/>
            <person name="Copeland A."/>
            <person name="Lapidus A."/>
            <person name="Glavina del Rio T."/>
            <person name="Dalin E."/>
            <person name="Tice H."/>
            <person name="Bruce D."/>
            <person name="Goodwin L."/>
            <person name="Pitluck S."/>
            <person name="Sims D."/>
            <person name="Brettin T."/>
            <person name="Detter J.C."/>
            <person name="Han C."/>
            <person name="Larimer F."/>
            <person name="Land M."/>
            <person name="Hauser L."/>
            <person name="Kyrpides N."/>
            <person name="Mikhailova N."/>
            <person name="Hazen T.C."/>
            <person name="Richardson P."/>
        </authorList>
    </citation>
    <scope>NUCLEOTIDE SEQUENCE [LARGE SCALE GENOMIC DNA]</scope>
    <source>
        <strain>DSM 19637 / Miyazaki F</strain>
    </source>
</reference>
<protein>
    <recommendedName>
        <fullName evidence="1">Imidazole glycerol phosphate synthase subunit HisH</fullName>
        <ecNumber evidence="1">4.3.2.10</ecNumber>
    </recommendedName>
    <alternativeName>
        <fullName evidence="1">IGP synthase glutaminase subunit</fullName>
        <ecNumber evidence="1">3.5.1.2</ecNumber>
    </alternativeName>
    <alternativeName>
        <fullName evidence="1">IGP synthase subunit HisH</fullName>
    </alternativeName>
    <alternativeName>
        <fullName evidence="1">ImGP synthase subunit HisH</fullName>
        <shortName evidence="1">IGPS subunit HisH</shortName>
    </alternativeName>
</protein>
<organism>
    <name type="scientific">Nitratidesulfovibrio vulgaris (strain DSM 19637 / Miyazaki F)</name>
    <name type="common">Desulfovibrio vulgaris</name>
    <dbReference type="NCBI Taxonomy" id="883"/>
    <lineage>
        <taxon>Bacteria</taxon>
        <taxon>Pseudomonadati</taxon>
        <taxon>Thermodesulfobacteriota</taxon>
        <taxon>Desulfovibrionia</taxon>
        <taxon>Desulfovibrionales</taxon>
        <taxon>Desulfovibrionaceae</taxon>
        <taxon>Nitratidesulfovibrio</taxon>
    </lineage>
</organism>
<dbReference type="EC" id="4.3.2.10" evidence="1"/>
<dbReference type="EC" id="3.5.1.2" evidence="1"/>
<dbReference type="EMBL" id="CP001197">
    <property type="protein sequence ID" value="ACL09246.1"/>
    <property type="molecule type" value="Genomic_DNA"/>
</dbReference>
<dbReference type="SMR" id="B8DQX7"/>
<dbReference type="STRING" id="883.DvMF_2305"/>
<dbReference type="KEGG" id="dvm:DvMF_2305"/>
<dbReference type="eggNOG" id="COG0118">
    <property type="taxonomic scope" value="Bacteria"/>
</dbReference>
<dbReference type="HOGENOM" id="CLU_071837_2_0_7"/>
<dbReference type="OrthoDB" id="9807749at2"/>
<dbReference type="UniPathway" id="UPA00031">
    <property type="reaction ID" value="UER00010"/>
</dbReference>
<dbReference type="GO" id="GO:0005737">
    <property type="term" value="C:cytoplasm"/>
    <property type="evidence" value="ECO:0007669"/>
    <property type="project" value="UniProtKB-SubCell"/>
</dbReference>
<dbReference type="GO" id="GO:0004359">
    <property type="term" value="F:glutaminase activity"/>
    <property type="evidence" value="ECO:0007669"/>
    <property type="project" value="UniProtKB-EC"/>
</dbReference>
<dbReference type="GO" id="GO:0000107">
    <property type="term" value="F:imidazoleglycerol-phosphate synthase activity"/>
    <property type="evidence" value="ECO:0007669"/>
    <property type="project" value="UniProtKB-UniRule"/>
</dbReference>
<dbReference type="GO" id="GO:0016829">
    <property type="term" value="F:lyase activity"/>
    <property type="evidence" value="ECO:0007669"/>
    <property type="project" value="UniProtKB-KW"/>
</dbReference>
<dbReference type="GO" id="GO:0000105">
    <property type="term" value="P:L-histidine biosynthetic process"/>
    <property type="evidence" value="ECO:0007669"/>
    <property type="project" value="UniProtKB-UniRule"/>
</dbReference>
<dbReference type="CDD" id="cd01748">
    <property type="entry name" value="GATase1_IGP_Synthase"/>
    <property type="match status" value="1"/>
</dbReference>
<dbReference type="Gene3D" id="3.40.50.880">
    <property type="match status" value="1"/>
</dbReference>
<dbReference type="HAMAP" id="MF_00278">
    <property type="entry name" value="HisH"/>
    <property type="match status" value="1"/>
</dbReference>
<dbReference type="InterPro" id="IPR029062">
    <property type="entry name" value="Class_I_gatase-like"/>
</dbReference>
<dbReference type="InterPro" id="IPR017926">
    <property type="entry name" value="GATASE"/>
</dbReference>
<dbReference type="InterPro" id="IPR010139">
    <property type="entry name" value="Imidazole-glycPsynth_HisH"/>
</dbReference>
<dbReference type="NCBIfam" id="TIGR01855">
    <property type="entry name" value="IMP_synth_hisH"/>
    <property type="match status" value="1"/>
</dbReference>
<dbReference type="PANTHER" id="PTHR42701">
    <property type="entry name" value="IMIDAZOLE GLYCEROL PHOSPHATE SYNTHASE SUBUNIT HISH"/>
    <property type="match status" value="1"/>
</dbReference>
<dbReference type="PANTHER" id="PTHR42701:SF1">
    <property type="entry name" value="IMIDAZOLE GLYCEROL PHOSPHATE SYNTHASE SUBUNIT HISH"/>
    <property type="match status" value="1"/>
</dbReference>
<dbReference type="Pfam" id="PF00117">
    <property type="entry name" value="GATase"/>
    <property type="match status" value="1"/>
</dbReference>
<dbReference type="PIRSF" id="PIRSF000495">
    <property type="entry name" value="Amidotransf_hisH"/>
    <property type="match status" value="1"/>
</dbReference>
<dbReference type="SUPFAM" id="SSF52317">
    <property type="entry name" value="Class I glutamine amidotransferase-like"/>
    <property type="match status" value="1"/>
</dbReference>
<dbReference type="PROSITE" id="PS51273">
    <property type="entry name" value="GATASE_TYPE_1"/>
    <property type="match status" value="1"/>
</dbReference>
<accession>B8DQX7</accession>
<gene>
    <name evidence="1" type="primary">hisH</name>
    <name type="ordered locus">DvMF_2305</name>
</gene>
<name>HIS5_NITV9</name>
<sequence>MLAILDYKAGNQTSVRRALDHLGIPCVITADPAVIAGAHGVIFPGVGAAGQAMNELLTTGLDKVLKDQVQAGKPLLGICVGCQIMLDYSQENDTKALGIVPGECRLFNAAWTEEDGTPIRVPHMGWNSIVQKRPCELLKGIEPEAEFYFVHSYYPAPPESYVIATCTYGEEFCAIHGGPGLWAVQFHPEKSGRPGLALLRNFYAYCKEASRA</sequence>
<keyword id="KW-0028">Amino-acid biosynthesis</keyword>
<keyword id="KW-0963">Cytoplasm</keyword>
<keyword id="KW-0315">Glutamine amidotransferase</keyword>
<keyword id="KW-0368">Histidine biosynthesis</keyword>
<keyword id="KW-0378">Hydrolase</keyword>
<keyword id="KW-0456">Lyase</keyword>
<proteinExistence type="inferred from homology"/>